<evidence type="ECO:0000255" key="1"/>
<evidence type="ECO:0000305" key="2"/>
<dbReference type="EMBL" id="AE000782">
    <property type="protein sequence ID" value="AAB90312.1"/>
    <property type="molecule type" value="Genomic_DNA"/>
</dbReference>
<dbReference type="PIR" id="B69368">
    <property type="entry name" value="B69368"/>
</dbReference>
<dbReference type="RefSeq" id="WP_010878446.1">
    <property type="nucleotide sequence ID" value="NC_000917.1"/>
</dbReference>
<dbReference type="STRING" id="224325.AF_0946"/>
<dbReference type="PaxDb" id="224325-AF_0946"/>
<dbReference type="EnsemblBacteria" id="AAB90312">
    <property type="protein sequence ID" value="AAB90312"/>
    <property type="gene ID" value="AF_0946"/>
</dbReference>
<dbReference type="GeneID" id="63606521"/>
<dbReference type="KEGG" id="afu:AF_0946"/>
<dbReference type="eggNOG" id="arCOG06913">
    <property type="taxonomic scope" value="Archaea"/>
</dbReference>
<dbReference type="HOGENOM" id="CLU_321509_0_0_2"/>
<dbReference type="OrthoDB" id="137508at2157"/>
<dbReference type="Proteomes" id="UP000002199">
    <property type="component" value="Chromosome"/>
</dbReference>
<dbReference type="GO" id="GO:0016020">
    <property type="term" value="C:membrane"/>
    <property type="evidence" value="ECO:0007669"/>
    <property type="project" value="UniProtKB-SubCell"/>
</dbReference>
<dbReference type="InterPro" id="IPR026371">
    <property type="entry name" value="PGF_CTERM"/>
</dbReference>
<dbReference type="NCBIfam" id="TIGR04126">
    <property type="entry name" value="PGF_CTERM"/>
    <property type="match status" value="1"/>
</dbReference>
<dbReference type="Pfam" id="PF18204">
    <property type="entry name" value="PGF-CTERM"/>
    <property type="match status" value="1"/>
</dbReference>
<keyword id="KW-0472">Membrane</keyword>
<keyword id="KW-1185">Reference proteome</keyword>
<keyword id="KW-0732">Signal</keyword>
<keyword id="KW-0812">Transmembrane</keyword>
<keyword id="KW-1133">Transmembrane helix</keyword>
<reference key="1">
    <citation type="journal article" date="1997" name="Nature">
        <title>The complete genome sequence of the hyperthermophilic, sulphate-reducing archaeon Archaeoglobus fulgidus.</title>
        <authorList>
            <person name="Klenk H.-P."/>
            <person name="Clayton R.A."/>
            <person name="Tomb J.-F."/>
            <person name="White O."/>
            <person name="Nelson K.E."/>
            <person name="Ketchum K.A."/>
            <person name="Dodson R.J."/>
            <person name="Gwinn M.L."/>
            <person name="Hickey E.K."/>
            <person name="Peterson J.D."/>
            <person name="Richardson D.L."/>
            <person name="Kerlavage A.R."/>
            <person name="Graham D.E."/>
            <person name="Kyrpides N.C."/>
            <person name="Fleischmann R.D."/>
            <person name="Quackenbush J."/>
            <person name="Lee N.H."/>
            <person name="Sutton G.G."/>
            <person name="Gill S.R."/>
            <person name="Kirkness E.F."/>
            <person name="Dougherty B.A."/>
            <person name="McKenney K."/>
            <person name="Adams M.D."/>
            <person name="Loftus B.J."/>
            <person name="Peterson S.N."/>
            <person name="Reich C.I."/>
            <person name="McNeil L.K."/>
            <person name="Badger J.H."/>
            <person name="Glodek A."/>
            <person name="Zhou L."/>
            <person name="Overbeek R."/>
            <person name="Gocayne J.D."/>
            <person name="Weidman J.F."/>
            <person name="McDonald L.A."/>
            <person name="Utterback T.R."/>
            <person name="Cotton M.D."/>
            <person name="Spriggs T."/>
            <person name="Artiach P."/>
            <person name="Kaine B.P."/>
            <person name="Sykes S.M."/>
            <person name="Sadow P.W."/>
            <person name="D'Andrea K.P."/>
            <person name="Bowman C."/>
            <person name="Fujii C."/>
            <person name="Garland S.A."/>
            <person name="Mason T.M."/>
            <person name="Olsen G.J."/>
            <person name="Fraser C.M."/>
            <person name="Smith H.O."/>
            <person name="Woese C.R."/>
            <person name="Venter J.C."/>
        </authorList>
    </citation>
    <scope>NUCLEOTIDE SEQUENCE [LARGE SCALE GENOMIC DNA]</scope>
    <source>
        <strain>ATCC 49558 / DSM 4304 / JCM 9628 / NBRC 100126 / VC-16</strain>
    </source>
</reference>
<organism>
    <name type="scientific">Archaeoglobus fulgidus (strain ATCC 49558 / DSM 4304 / JCM 9628 / NBRC 100126 / VC-16)</name>
    <dbReference type="NCBI Taxonomy" id="224325"/>
    <lineage>
        <taxon>Archaea</taxon>
        <taxon>Methanobacteriati</taxon>
        <taxon>Methanobacteriota</taxon>
        <taxon>Archaeoglobi</taxon>
        <taxon>Archaeoglobales</taxon>
        <taxon>Archaeoglobaceae</taxon>
        <taxon>Archaeoglobus</taxon>
    </lineage>
</organism>
<gene>
    <name type="ordered locus">AF_0946</name>
</gene>
<feature type="signal peptide" evidence="1">
    <location>
        <begin position="1"/>
        <end position="24"/>
    </location>
</feature>
<feature type="chain" id="PRO_0000013648" description="Uncharacterized protein AF_0946">
    <location>
        <begin position="25"/>
        <end position="1036"/>
    </location>
</feature>
<feature type="transmembrane region" description="Helical" evidence="1">
    <location>
        <begin position="1011"/>
        <end position="1033"/>
    </location>
</feature>
<name>Y946_ARCFU</name>
<comment type="subcellular location">
    <subcellularLocation>
        <location evidence="2">Membrane</location>
        <topology evidence="2">Single-pass membrane protein</topology>
    </subcellularLocation>
</comment>
<proteinExistence type="inferred from homology"/>
<protein>
    <recommendedName>
        <fullName>Uncharacterized protein AF_0946</fullName>
    </recommendedName>
</protein>
<sequence length="1036" mass="112426">MKRVGLIGVIMAALLVISATPVMAGVSVKVSVNTTYPGELTVENFNLTPTYGRVPLTINITDVYLKNTNLTTPLSGTVYLYVNGQIKNNYYCSVTQTNNTTSWMSCGIEYTITDTSQTNISVGNKTDYLQNVTLTLWTTQLPESYVPQIPTLDLKDDGPISVDVLKIPSLKLSDDQVNVGETVTIEANWNYYAKEDGTRRIAVVSWADYRNIRSGATIDVATLLDKSKMTISLPEDGGSNSWDFTPTEPGYYVVVAFVDDTNFSDVLVFRATPTAAEKPTVSISVSKSVVALGDYIKVGASMSTDQAVKPIAVFITGANQTEVLCSYPEPGASTVGAWTVKEACGDDEWWIQIKDRPEGVYVAKIDVGEGELRAEATAVFQVVKPKILSLDVPSQHVKGQDLVITGTTNLAKSGTEDDSGSNAAENKAYLVIKDLSGKEVFNDTLSNQVYDSTGGKVKSNAVSLIDSDGSFKFKIDYFGKYFATETGFYIAEVKIQSDSLGEYTDTETATFEVVKPELKLIADKTTVTRGDTVTFTIDTNLKINSEVKFKIDDLAFCSGDPDCDVKEKTYYVDALGDVVIKLDVNTEAPLTDYKFTAEIPGLGISTDIRVSVVKQTLDISVDRTTVPRGGDIRVTGSSTADGVYIYASDSGVFTVGDTPVPDVDLKTKGSKINTTDVPYMEPDDNDNIDFQISVNVTGVETGTYYLYFYAPANISVVDKASDPQKIIAVTVTDPQIVEVTAPSKVPYQSKFEVSVLTDPGDRDNVEVRLVLSGPNVRDTTVADWASVDTNNYFNKTVDLRDIAKNKLNLDALEPGLYVLTAELRFKQSLGGEKVDSEDKLIEILGLTFEVDVNTPVVIGDEIVVNITTDRLEAGYDKIFVTLVGTNYKVTQVATLNSEGKATVTFETYGMSAGTYKVYVRDTMDTCSETDQYTWVDEHYMLDPASELAPMYKADDDVLVIKTIELLETAPTTTTVVTTTTAVTTTTVATTTTAVETTTTEAVTTTTEAQQGGGVPGFEAVFAIAGLLAVAYLLRRK</sequence>
<accession>O29316</accession>